<evidence type="ECO:0000250" key="1"/>
<evidence type="ECO:0000255" key="2">
    <source>
        <dbReference type="PROSITE-ProRule" id="PRU00251"/>
    </source>
</evidence>
<evidence type="ECO:0000255" key="3">
    <source>
        <dbReference type="PROSITE-ProRule" id="PRU00629"/>
    </source>
</evidence>
<evidence type="ECO:0000256" key="4">
    <source>
        <dbReference type="SAM" id="MobiDB-lite"/>
    </source>
</evidence>
<protein>
    <recommendedName>
        <fullName>Transcription factor CAULIFLOWER</fullName>
        <shortName>BccCAL</shortName>
    </recommendedName>
    <alternativeName>
        <fullName>Agamous-like MADS-box protein CAL</fullName>
    </alternativeName>
</protein>
<sequence>MGRGRVEMKRIENKINRQVTFSKRRAGLLKKAHEISILCDAEVSLIVFSHKGKLFEYSSESCMEKVLERYERYSYAEKQLKAPDSHVNAQTNWSMEYSRLKAKIELLERNQRHYLGEDLESISIKELQNLEQQLDTSLKHIRSRKNQLMHESLNHLQRKEKEILEENSMLTKQIKERESILRTHQNQSEQQNRSHHVAPQPQPQLNPYMISHQASPFLNMGGMYQGEDPTAVRRNRLDLTLEPIYNCNLGYFAA</sequence>
<accession>Q6R4S6</accession>
<gene>
    <name type="primary">CAL</name>
</gene>
<dbReference type="EMBL" id="AY514045">
    <property type="protein sequence ID" value="AAS67303.1"/>
    <property type="molecule type" value="mRNA"/>
</dbReference>
<dbReference type="SMR" id="Q6R4S6"/>
<dbReference type="GO" id="GO:0005634">
    <property type="term" value="C:nucleus"/>
    <property type="evidence" value="ECO:0007669"/>
    <property type="project" value="UniProtKB-SubCell"/>
</dbReference>
<dbReference type="GO" id="GO:0003700">
    <property type="term" value="F:DNA-binding transcription factor activity"/>
    <property type="evidence" value="ECO:0007669"/>
    <property type="project" value="InterPro"/>
</dbReference>
<dbReference type="GO" id="GO:0046983">
    <property type="term" value="F:protein dimerization activity"/>
    <property type="evidence" value="ECO:0007669"/>
    <property type="project" value="InterPro"/>
</dbReference>
<dbReference type="GO" id="GO:0000977">
    <property type="term" value="F:RNA polymerase II transcription regulatory region sequence-specific DNA binding"/>
    <property type="evidence" value="ECO:0007669"/>
    <property type="project" value="InterPro"/>
</dbReference>
<dbReference type="GO" id="GO:0030154">
    <property type="term" value="P:cell differentiation"/>
    <property type="evidence" value="ECO:0007669"/>
    <property type="project" value="UniProtKB-KW"/>
</dbReference>
<dbReference type="GO" id="GO:0009908">
    <property type="term" value="P:flower development"/>
    <property type="evidence" value="ECO:0007669"/>
    <property type="project" value="UniProtKB-KW"/>
</dbReference>
<dbReference type="GO" id="GO:0045944">
    <property type="term" value="P:positive regulation of transcription by RNA polymerase II"/>
    <property type="evidence" value="ECO:0007669"/>
    <property type="project" value="InterPro"/>
</dbReference>
<dbReference type="CDD" id="cd00265">
    <property type="entry name" value="MADS_MEF2_like"/>
    <property type="match status" value="1"/>
</dbReference>
<dbReference type="FunFam" id="3.40.1810.10:FF:000003">
    <property type="entry name" value="MADS-box transcription factor MADS-MC"/>
    <property type="match status" value="1"/>
</dbReference>
<dbReference type="Gene3D" id="3.40.1810.10">
    <property type="entry name" value="Transcription factor, MADS-box"/>
    <property type="match status" value="1"/>
</dbReference>
<dbReference type="InterPro" id="IPR050142">
    <property type="entry name" value="MADS-box/MEF2_TF"/>
</dbReference>
<dbReference type="InterPro" id="IPR033896">
    <property type="entry name" value="MEF2-like_N"/>
</dbReference>
<dbReference type="InterPro" id="IPR002487">
    <property type="entry name" value="TF_Kbox"/>
</dbReference>
<dbReference type="InterPro" id="IPR002100">
    <property type="entry name" value="TF_MADSbox"/>
</dbReference>
<dbReference type="InterPro" id="IPR036879">
    <property type="entry name" value="TF_MADSbox_sf"/>
</dbReference>
<dbReference type="PANTHER" id="PTHR48019">
    <property type="entry name" value="SERUM RESPONSE FACTOR HOMOLOG"/>
    <property type="match status" value="1"/>
</dbReference>
<dbReference type="Pfam" id="PF01486">
    <property type="entry name" value="K-box"/>
    <property type="match status" value="1"/>
</dbReference>
<dbReference type="Pfam" id="PF00319">
    <property type="entry name" value="SRF-TF"/>
    <property type="match status" value="1"/>
</dbReference>
<dbReference type="PRINTS" id="PR00404">
    <property type="entry name" value="MADSDOMAIN"/>
</dbReference>
<dbReference type="SMART" id="SM00432">
    <property type="entry name" value="MADS"/>
    <property type="match status" value="1"/>
</dbReference>
<dbReference type="SUPFAM" id="SSF55455">
    <property type="entry name" value="SRF-like"/>
    <property type="match status" value="1"/>
</dbReference>
<dbReference type="PROSITE" id="PS51297">
    <property type="entry name" value="K_BOX"/>
    <property type="match status" value="1"/>
</dbReference>
<dbReference type="PROSITE" id="PS00350">
    <property type="entry name" value="MADS_BOX_1"/>
    <property type="match status" value="1"/>
</dbReference>
<dbReference type="PROSITE" id="PS50066">
    <property type="entry name" value="MADS_BOX_2"/>
    <property type="match status" value="1"/>
</dbReference>
<proteinExistence type="evidence at transcript level"/>
<feature type="chain" id="PRO_0000417146" description="Transcription factor CAULIFLOWER">
    <location>
        <begin position="1"/>
        <end position="254"/>
    </location>
</feature>
<feature type="domain" description="MADS-box" evidence="2">
    <location>
        <begin position="1"/>
        <end position="61"/>
    </location>
</feature>
<feature type="domain" description="K-box" evidence="3">
    <location>
        <begin position="90"/>
        <end position="180"/>
    </location>
</feature>
<feature type="region of interest" description="Disordered" evidence="4">
    <location>
        <begin position="182"/>
        <end position="205"/>
    </location>
</feature>
<feature type="compositionally biased region" description="Polar residues" evidence="4">
    <location>
        <begin position="182"/>
        <end position="191"/>
    </location>
</feature>
<keyword id="KW-0010">Activator</keyword>
<keyword id="KW-0175">Coiled coil</keyword>
<keyword id="KW-0217">Developmental protein</keyword>
<keyword id="KW-0221">Differentiation</keyword>
<keyword id="KW-0238">DNA-binding</keyword>
<keyword id="KW-0287">Flowering</keyword>
<keyword id="KW-0539">Nucleus</keyword>
<keyword id="KW-0804">Transcription</keyword>
<keyword id="KW-0805">Transcription regulation</keyword>
<name>CAL_BRARC</name>
<comment type="function">
    <text evidence="1">Probable transcription factor that promotes early floral meristem identity in synergy with APETALA1, FRUITFULL and LEAFY. Is required subsequently for the transition of an inflorescence meristem into a floral meristem. Seems to be partially redundant to the function of APETALA1 (By similarity).</text>
</comment>
<comment type="subunit">
    <text evidence="1">Homodimer capable of binding to CArG-box sequences.</text>
</comment>
<comment type="subcellular location">
    <subcellularLocation>
        <location evidence="2">Nucleus</location>
    </subcellularLocation>
</comment>
<comment type="miscellaneous">
    <text>CAULIFLOWER may contribute to the shape of the floral meristem. This trait has likely been selected by early farmers during the domestication of modified inflorescence structures.</text>
</comment>
<reference key="1">
    <citation type="submission" date="2003-12" db="EMBL/GenBank/DDBJ databases">
        <authorList>
            <person name="He Y.-K."/>
            <person name="Cao W.-G."/>
            <person name="Liu P.-L."/>
            <person name="Shen R.-J."/>
        </authorList>
    </citation>
    <scope>NUCLEOTIDE SEQUENCE [MRNA]</scope>
    <source>
        <strain>cv. communis</strain>
    </source>
</reference>
<reference key="2">
    <citation type="journal article" date="2000" name="Genetics">
        <title>Variation and selection at the CAULIFLOWER floral homeotic gene accompanying the evolution of domesticated Brassica oleracea.</title>
        <authorList>
            <person name="Purugganan M.D."/>
            <person name="Boyles A.L."/>
            <person name="Suddith J.I."/>
        </authorList>
    </citation>
    <scope>REVIEW</scope>
    <scope>GENE FAMILY</scope>
</reference>
<organism>
    <name type="scientific">Brassica rapa subsp. chinensis</name>
    <name type="common">Pak-choi</name>
    <name type="synonym">Brassica chinensis</name>
    <dbReference type="NCBI Taxonomy" id="93385"/>
    <lineage>
        <taxon>Eukaryota</taxon>
        <taxon>Viridiplantae</taxon>
        <taxon>Streptophyta</taxon>
        <taxon>Embryophyta</taxon>
        <taxon>Tracheophyta</taxon>
        <taxon>Spermatophyta</taxon>
        <taxon>Magnoliopsida</taxon>
        <taxon>eudicotyledons</taxon>
        <taxon>Gunneridae</taxon>
        <taxon>Pentapetalae</taxon>
        <taxon>rosids</taxon>
        <taxon>malvids</taxon>
        <taxon>Brassicales</taxon>
        <taxon>Brassicaceae</taxon>
        <taxon>Brassiceae</taxon>
        <taxon>Brassica</taxon>
    </lineage>
</organism>